<feature type="chain" id="PRO_1000204034" description="GTPase Der">
    <location>
        <begin position="1"/>
        <end position="444"/>
    </location>
</feature>
<feature type="domain" description="EngA-type G 1">
    <location>
        <begin position="3"/>
        <end position="167"/>
    </location>
</feature>
<feature type="domain" description="EngA-type G 2">
    <location>
        <begin position="180"/>
        <end position="353"/>
    </location>
</feature>
<feature type="domain" description="KH-like" evidence="1">
    <location>
        <begin position="354"/>
        <end position="438"/>
    </location>
</feature>
<feature type="binding site" evidence="1">
    <location>
        <begin position="9"/>
        <end position="16"/>
    </location>
    <ligand>
        <name>GTP</name>
        <dbReference type="ChEBI" id="CHEBI:37565"/>
        <label>1</label>
    </ligand>
</feature>
<feature type="binding site" evidence="1">
    <location>
        <begin position="56"/>
        <end position="60"/>
    </location>
    <ligand>
        <name>GTP</name>
        <dbReference type="ChEBI" id="CHEBI:37565"/>
        <label>1</label>
    </ligand>
</feature>
<feature type="binding site" evidence="1">
    <location>
        <begin position="119"/>
        <end position="122"/>
    </location>
    <ligand>
        <name>GTP</name>
        <dbReference type="ChEBI" id="CHEBI:37565"/>
        <label>1</label>
    </ligand>
</feature>
<feature type="binding site" evidence="1">
    <location>
        <begin position="186"/>
        <end position="193"/>
    </location>
    <ligand>
        <name>GTP</name>
        <dbReference type="ChEBI" id="CHEBI:37565"/>
        <label>2</label>
    </ligand>
</feature>
<feature type="binding site" evidence="1">
    <location>
        <begin position="233"/>
        <end position="237"/>
    </location>
    <ligand>
        <name>GTP</name>
        <dbReference type="ChEBI" id="CHEBI:37565"/>
        <label>2</label>
    </ligand>
</feature>
<feature type="binding site" evidence="1">
    <location>
        <begin position="298"/>
        <end position="301"/>
    </location>
    <ligand>
        <name>GTP</name>
        <dbReference type="ChEBI" id="CHEBI:37565"/>
        <label>2</label>
    </ligand>
</feature>
<reference key="1">
    <citation type="journal article" date="2009" name="Genome Res.">
        <title>Whole genome sequence of Desulfovibrio magneticus strain RS-1 revealed common gene clusters in magnetotactic bacteria.</title>
        <authorList>
            <person name="Nakazawa H."/>
            <person name="Arakaki A."/>
            <person name="Narita-Yamada S."/>
            <person name="Yashiro I."/>
            <person name="Jinno K."/>
            <person name="Aoki N."/>
            <person name="Tsuruyama A."/>
            <person name="Okamura Y."/>
            <person name="Tanikawa S."/>
            <person name="Fujita N."/>
            <person name="Takeyama H."/>
            <person name="Matsunaga T."/>
        </authorList>
    </citation>
    <scope>NUCLEOTIDE SEQUENCE [LARGE SCALE GENOMIC DNA]</scope>
    <source>
        <strain>ATCC 700980 / DSM 13731 / RS-1</strain>
    </source>
</reference>
<dbReference type="EMBL" id="AP010904">
    <property type="protein sequence ID" value="BAH76624.1"/>
    <property type="molecule type" value="Genomic_DNA"/>
</dbReference>
<dbReference type="RefSeq" id="WP_015861778.1">
    <property type="nucleotide sequence ID" value="NC_012796.1"/>
</dbReference>
<dbReference type="SMR" id="C4XIQ6"/>
<dbReference type="STRING" id="573370.DMR_31340"/>
<dbReference type="KEGG" id="dma:DMR_31340"/>
<dbReference type="eggNOG" id="COG1160">
    <property type="taxonomic scope" value="Bacteria"/>
</dbReference>
<dbReference type="HOGENOM" id="CLU_016077_6_2_7"/>
<dbReference type="OrthoDB" id="9805918at2"/>
<dbReference type="Proteomes" id="UP000009071">
    <property type="component" value="Chromosome"/>
</dbReference>
<dbReference type="GO" id="GO:0005525">
    <property type="term" value="F:GTP binding"/>
    <property type="evidence" value="ECO:0007669"/>
    <property type="project" value="UniProtKB-UniRule"/>
</dbReference>
<dbReference type="GO" id="GO:0043022">
    <property type="term" value="F:ribosome binding"/>
    <property type="evidence" value="ECO:0007669"/>
    <property type="project" value="TreeGrafter"/>
</dbReference>
<dbReference type="GO" id="GO:0042254">
    <property type="term" value="P:ribosome biogenesis"/>
    <property type="evidence" value="ECO:0007669"/>
    <property type="project" value="UniProtKB-KW"/>
</dbReference>
<dbReference type="CDD" id="cd01894">
    <property type="entry name" value="EngA1"/>
    <property type="match status" value="1"/>
</dbReference>
<dbReference type="CDD" id="cd01895">
    <property type="entry name" value="EngA2"/>
    <property type="match status" value="1"/>
</dbReference>
<dbReference type="FunFam" id="3.30.300.20:FF:000004">
    <property type="entry name" value="GTPase Der"/>
    <property type="match status" value="1"/>
</dbReference>
<dbReference type="FunFam" id="3.40.50.300:FF:000494">
    <property type="entry name" value="tRNA modification GTPase MnmE"/>
    <property type="match status" value="1"/>
</dbReference>
<dbReference type="Gene3D" id="3.30.300.20">
    <property type="match status" value="1"/>
</dbReference>
<dbReference type="Gene3D" id="3.40.50.300">
    <property type="entry name" value="P-loop containing nucleotide triphosphate hydrolases"/>
    <property type="match status" value="2"/>
</dbReference>
<dbReference type="HAMAP" id="MF_00195">
    <property type="entry name" value="GTPase_Der"/>
    <property type="match status" value="1"/>
</dbReference>
<dbReference type="InterPro" id="IPR031166">
    <property type="entry name" value="G_ENGA"/>
</dbReference>
<dbReference type="InterPro" id="IPR006073">
    <property type="entry name" value="GTP-bd"/>
</dbReference>
<dbReference type="InterPro" id="IPR016484">
    <property type="entry name" value="GTPase_Der"/>
</dbReference>
<dbReference type="InterPro" id="IPR032859">
    <property type="entry name" value="KH_dom-like"/>
</dbReference>
<dbReference type="InterPro" id="IPR015946">
    <property type="entry name" value="KH_dom-like_a/b"/>
</dbReference>
<dbReference type="InterPro" id="IPR027417">
    <property type="entry name" value="P-loop_NTPase"/>
</dbReference>
<dbReference type="InterPro" id="IPR005225">
    <property type="entry name" value="Small_GTP-bd"/>
</dbReference>
<dbReference type="NCBIfam" id="TIGR03594">
    <property type="entry name" value="GTPase_EngA"/>
    <property type="match status" value="1"/>
</dbReference>
<dbReference type="NCBIfam" id="TIGR00231">
    <property type="entry name" value="small_GTP"/>
    <property type="match status" value="2"/>
</dbReference>
<dbReference type="PANTHER" id="PTHR43834">
    <property type="entry name" value="GTPASE DER"/>
    <property type="match status" value="1"/>
</dbReference>
<dbReference type="PANTHER" id="PTHR43834:SF6">
    <property type="entry name" value="GTPASE DER"/>
    <property type="match status" value="1"/>
</dbReference>
<dbReference type="Pfam" id="PF14714">
    <property type="entry name" value="KH_dom-like"/>
    <property type="match status" value="1"/>
</dbReference>
<dbReference type="Pfam" id="PF01926">
    <property type="entry name" value="MMR_HSR1"/>
    <property type="match status" value="2"/>
</dbReference>
<dbReference type="PIRSF" id="PIRSF006485">
    <property type="entry name" value="GTP-binding_EngA"/>
    <property type="match status" value="1"/>
</dbReference>
<dbReference type="PRINTS" id="PR00326">
    <property type="entry name" value="GTP1OBG"/>
</dbReference>
<dbReference type="SUPFAM" id="SSF52540">
    <property type="entry name" value="P-loop containing nucleoside triphosphate hydrolases"/>
    <property type="match status" value="2"/>
</dbReference>
<dbReference type="PROSITE" id="PS51712">
    <property type="entry name" value="G_ENGA"/>
    <property type="match status" value="2"/>
</dbReference>
<name>DER_SOLM1</name>
<accession>C4XIQ6</accession>
<gene>
    <name evidence="1" type="primary">der</name>
    <name type="synonym">engA</name>
    <name type="ordered locus">DMR_31340</name>
</gene>
<sequence length="444" mass="48365">MPPIVAIVGRPNVGKSTLFNRLTRGRRAITHDLPGVTRDRLEAPAEIEGRFVTLVDTGGMDYEAEESLARQIVEQAEAALVTADVVLFLVDGKAGRTALEDDLAERLRRLGKPVIVAVNKVDGLERVAAMTADFHAWGLPLLAISAAHGQGMAELAEAIAERLPEAEPYDPDAPLVQTVLRLAVLGRPNAGKSSLINALVGESRLIVSDIAGTTRDAVDVVVHQKGKRYLFVDTAGVRKRTRITDGLERYSVAKALSSAKRADVAVVVIDATGGVGVQDKRLISFLDSERKAFLVAVNKTDLVPQKDMLALQKDIARELRMCSHVPVLYMSAAKGKGVAKVLPQAEAIWAECQIRIGTGELNRAMRASLDKHQPPLVNGRRAKFYYLTQAADAPPTFVFFVSDTERVRDSYIKYLENSLRKLFGIATAPVKVVCRASHKPKDER</sequence>
<evidence type="ECO:0000255" key="1">
    <source>
        <dbReference type="HAMAP-Rule" id="MF_00195"/>
    </source>
</evidence>
<keyword id="KW-0342">GTP-binding</keyword>
<keyword id="KW-0547">Nucleotide-binding</keyword>
<keyword id="KW-0677">Repeat</keyword>
<keyword id="KW-0690">Ribosome biogenesis</keyword>
<proteinExistence type="inferred from homology"/>
<comment type="function">
    <text evidence="1">GTPase that plays an essential role in the late steps of ribosome biogenesis.</text>
</comment>
<comment type="subunit">
    <text evidence="1">Associates with the 50S ribosomal subunit.</text>
</comment>
<comment type="similarity">
    <text evidence="1">Belongs to the TRAFAC class TrmE-Era-EngA-EngB-Septin-like GTPase superfamily. EngA (Der) GTPase family.</text>
</comment>
<organism>
    <name type="scientific">Solidesulfovibrio magneticus (strain ATCC 700980 / DSM 13731 / RS-1)</name>
    <name type="common">Desulfovibrio magneticus</name>
    <dbReference type="NCBI Taxonomy" id="573370"/>
    <lineage>
        <taxon>Bacteria</taxon>
        <taxon>Pseudomonadati</taxon>
        <taxon>Thermodesulfobacteriota</taxon>
        <taxon>Desulfovibrionia</taxon>
        <taxon>Desulfovibrionales</taxon>
        <taxon>Desulfovibrionaceae</taxon>
        <taxon>Solidesulfovibrio</taxon>
    </lineage>
</organism>
<protein>
    <recommendedName>
        <fullName evidence="1">GTPase Der</fullName>
    </recommendedName>
    <alternativeName>
        <fullName evidence="1">GTP-binding protein EngA</fullName>
    </alternativeName>
</protein>